<dbReference type="EMBL" id="AE015929">
    <property type="protein sequence ID" value="AAO04510.1"/>
    <property type="molecule type" value="Genomic_DNA"/>
</dbReference>
<dbReference type="RefSeq" id="NP_764468.1">
    <property type="nucleotide sequence ID" value="NC_004461.1"/>
</dbReference>
<dbReference type="RefSeq" id="WP_002439483.1">
    <property type="nucleotide sequence ID" value="NZ_WBME01000001.1"/>
</dbReference>
<dbReference type="SMR" id="Q8CSV0"/>
<dbReference type="GeneID" id="58051410"/>
<dbReference type="KEGG" id="sep:SE_0913"/>
<dbReference type="PATRIC" id="fig|176280.10.peg.886"/>
<dbReference type="eggNOG" id="COG0228">
    <property type="taxonomic scope" value="Bacteria"/>
</dbReference>
<dbReference type="HOGENOM" id="CLU_100590_5_0_9"/>
<dbReference type="OrthoDB" id="9807878at2"/>
<dbReference type="Proteomes" id="UP000001411">
    <property type="component" value="Chromosome"/>
</dbReference>
<dbReference type="GO" id="GO:0005737">
    <property type="term" value="C:cytoplasm"/>
    <property type="evidence" value="ECO:0007669"/>
    <property type="project" value="UniProtKB-ARBA"/>
</dbReference>
<dbReference type="GO" id="GO:0015935">
    <property type="term" value="C:small ribosomal subunit"/>
    <property type="evidence" value="ECO:0007669"/>
    <property type="project" value="TreeGrafter"/>
</dbReference>
<dbReference type="GO" id="GO:0003735">
    <property type="term" value="F:structural constituent of ribosome"/>
    <property type="evidence" value="ECO:0007669"/>
    <property type="project" value="InterPro"/>
</dbReference>
<dbReference type="GO" id="GO:0006412">
    <property type="term" value="P:translation"/>
    <property type="evidence" value="ECO:0007669"/>
    <property type="project" value="UniProtKB-UniRule"/>
</dbReference>
<dbReference type="FunFam" id="3.30.1320.10:FF:000002">
    <property type="entry name" value="30S ribosomal protein S16"/>
    <property type="match status" value="1"/>
</dbReference>
<dbReference type="Gene3D" id="3.30.1320.10">
    <property type="match status" value="1"/>
</dbReference>
<dbReference type="HAMAP" id="MF_00385">
    <property type="entry name" value="Ribosomal_bS16"/>
    <property type="match status" value="1"/>
</dbReference>
<dbReference type="InterPro" id="IPR000307">
    <property type="entry name" value="Ribosomal_bS16"/>
</dbReference>
<dbReference type="InterPro" id="IPR023803">
    <property type="entry name" value="Ribosomal_bS16_dom_sf"/>
</dbReference>
<dbReference type="NCBIfam" id="TIGR00002">
    <property type="entry name" value="S16"/>
    <property type="match status" value="1"/>
</dbReference>
<dbReference type="PANTHER" id="PTHR12919">
    <property type="entry name" value="30S RIBOSOMAL PROTEIN S16"/>
    <property type="match status" value="1"/>
</dbReference>
<dbReference type="PANTHER" id="PTHR12919:SF20">
    <property type="entry name" value="SMALL RIBOSOMAL SUBUNIT PROTEIN BS16M"/>
    <property type="match status" value="1"/>
</dbReference>
<dbReference type="Pfam" id="PF00886">
    <property type="entry name" value="Ribosomal_S16"/>
    <property type="match status" value="1"/>
</dbReference>
<dbReference type="SUPFAM" id="SSF54565">
    <property type="entry name" value="Ribosomal protein S16"/>
    <property type="match status" value="1"/>
</dbReference>
<protein>
    <recommendedName>
        <fullName evidence="1">Small ribosomal subunit protein bS16</fullName>
    </recommendedName>
    <alternativeName>
        <fullName evidence="2">30S ribosomal protein S16</fullName>
    </alternativeName>
</protein>
<evidence type="ECO:0000255" key="1">
    <source>
        <dbReference type="HAMAP-Rule" id="MF_00385"/>
    </source>
</evidence>
<evidence type="ECO:0000305" key="2"/>
<keyword id="KW-0687">Ribonucleoprotein</keyword>
<keyword id="KW-0689">Ribosomal protein</keyword>
<sequence>MAVKIRLTRLGSKRNPFYRIVVADARSPRDGRIIEQLGTYNPAHVNAPEVKIDEELALKWLHDGAKPTDTVHNILSREGILKKFDEQKNAK</sequence>
<name>RS16_STAES</name>
<comment type="similarity">
    <text evidence="1">Belongs to the bacterial ribosomal protein bS16 family.</text>
</comment>
<reference key="1">
    <citation type="journal article" date="2003" name="Mol. Microbiol.">
        <title>Genome-based analysis of virulence genes in a non-biofilm-forming Staphylococcus epidermidis strain (ATCC 12228).</title>
        <authorList>
            <person name="Zhang Y.-Q."/>
            <person name="Ren S.-X."/>
            <person name="Li H.-L."/>
            <person name="Wang Y.-X."/>
            <person name="Fu G."/>
            <person name="Yang J."/>
            <person name="Qin Z.-Q."/>
            <person name="Miao Y.-G."/>
            <person name="Wang W.-Y."/>
            <person name="Chen R.-S."/>
            <person name="Shen Y."/>
            <person name="Chen Z."/>
            <person name="Yuan Z.-H."/>
            <person name="Zhao G.-P."/>
            <person name="Qu D."/>
            <person name="Danchin A."/>
            <person name="Wen Y.-M."/>
        </authorList>
    </citation>
    <scope>NUCLEOTIDE SEQUENCE [LARGE SCALE GENOMIC DNA]</scope>
    <source>
        <strain>ATCC 12228 / FDA PCI 1200</strain>
    </source>
</reference>
<gene>
    <name evidence="1" type="primary">rpsP</name>
    <name type="ordered locus">SE_0913</name>
</gene>
<proteinExistence type="inferred from homology"/>
<feature type="chain" id="PRO_0000167247" description="Small ribosomal subunit protein bS16">
    <location>
        <begin position="1"/>
        <end position="91"/>
    </location>
</feature>
<accession>Q8CSV0</accession>
<organism>
    <name type="scientific">Staphylococcus epidermidis (strain ATCC 12228 / FDA PCI 1200)</name>
    <dbReference type="NCBI Taxonomy" id="176280"/>
    <lineage>
        <taxon>Bacteria</taxon>
        <taxon>Bacillati</taxon>
        <taxon>Bacillota</taxon>
        <taxon>Bacilli</taxon>
        <taxon>Bacillales</taxon>
        <taxon>Staphylococcaceae</taxon>
        <taxon>Staphylococcus</taxon>
    </lineage>
</organism>